<organism>
    <name type="scientific">Homo sapiens</name>
    <name type="common">Human</name>
    <dbReference type="NCBI Taxonomy" id="9606"/>
    <lineage>
        <taxon>Eukaryota</taxon>
        <taxon>Metazoa</taxon>
        <taxon>Chordata</taxon>
        <taxon>Craniata</taxon>
        <taxon>Vertebrata</taxon>
        <taxon>Euteleostomi</taxon>
        <taxon>Mammalia</taxon>
        <taxon>Eutheria</taxon>
        <taxon>Euarchontoglires</taxon>
        <taxon>Primates</taxon>
        <taxon>Haplorrhini</taxon>
        <taxon>Catarrhini</taxon>
        <taxon>Hominidae</taxon>
        <taxon>Homo</taxon>
    </lineage>
</organism>
<protein>
    <recommendedName>
        <fullName>Stromelysin-2</fullName>
        <shortName>SL-2</shortName>
        <ecNumber>3.4.24.22</ecNumber>
    </recommendedName>
    <alternativeName>
        <fullName>Matrix metalloproteinase-10</fullName>
        <shortName>MMP-10</shortName>
    </alternativeName>
    <alternativeName>
        <fullName>Transin-2</fullName>
    </alternativeName>
</protein>
<proteinExistence type="evidence at protein level"/>
<feature type="signal peptide" evidence="7">
    <location>
        <begin position="1"/>
        <end position="17"/>
    </location>
</feature>
<feature type="propeptide" id="PRO_0000028764" description="Activation peptide">
    <location>
        <begin position="18"/>
        <end position="98"/>
    </location>
</feature>
<feature type="chain" id="PRO_0000028765" description="Stromelysin-2">
    <location>
        <begin position="99"/>
        <end position="476"/>
    </location>
</feature>
<feature type="repeat" description="Hemopexin 1">
    <location>
        <begin position="286"/>
        <end position="335"/>
    </location>
</feature>
<feature type="repeat" description="Hemopexin 2">
    <location>
        <begin position="336"/>
        <end position="382"/>
    </location>
</feature>
<feature type="repeat" description="Hemopexin 3">
    <location>
        <begin position="384"/>
        <end position="432"/>
    </location>
</feature>
<feature type="repeat" description="Hemopexin 4">
    <location>
        <begin position="433"/>
        <end position="476"/>
    </location>
</feature>
<feature type="short sequence motif" description="Cysteine switch" evidence="1">
    <location>
        <begin position="89"/>
        <end position="96"/>
    </location>
</feature>
<feature type="active site" evidence="2 3">
    <location>
        <position position="218"/>
    </location>
</feature>
<feature type="binding site" description="in inhibited form" evidence="1">
    <location>
        <position position="91"/>
    </location>
    <ligand>
        <name>Zn(2+)</name>
        <dbReference type="ChEBI" id="CHEBI:29105"/>
        <note>catalytic</note>
    </ligand>
</feature>
<feature type="binding site">
    <location>
        <position position="167"/>
    </location>
    <ligand>
        <name>Zn(2+)</name>
        <dbReference type="ChEBI" id="CHEBI:29105"/>
        <label>1</label>
    </ligand>
</feature>
<feature type="binding site">
    <location>
        <position position="169"/>
    </location>
    <ligand>
        <name>Zn(2+)</name>
        <dbReference type="ChEBI" id="CHEBI:29105"/>
        <label>1</label>
    </ligand>
</feature>
<feature type="binding site">
    <location>
        <position position="182"/>
    </location>
    <ligand>
        <name>Zn(2+)</name>
        <dbReference type="ChEBI" id="CHEBI:29105"/>
        <label>1</label>
    </ligand>
</feature>
<feature type="binding site">
    <location>
        <position position="195"/>
    </location>
    <ligand>
        <name>Zn(2+)</name>
        <dbReference type="ChEBI" id="CHEBI:29105"/>
        <label>1</label>
    </ligand>
</feature>
<feature type="binding site">
    <location>
        <position position="217"/>
    </location>
    <ligand>
        <name>Zn(2+)</name>
        <dbReference type="ChEBI" id="CHEBI:29105"/>
        <label>2</label>
        <note>catalytic</note>
    </ligand>
</feature>
<feature type="binding site">
    <location>
        <position position="221"/>
    </location>
    <ligand>
        <name>Zn(2+)</name>
        <dbReference type="ChEBI" id="CHEBI:29105"/>
        <label>2</label>
        <note>catalytic</note>
    </ligand>
</feature>
<feature type="binding site">
    <location>
        <position position="227"/>
    </location>
    <ligand>
        <name>Zn(2+)</name>
        <dbReference type="ChEBI" id="CHEBI:29105"/>
        <label>2</label>
        <note>catalytic</note>
    </ligand>
</feature>
<feature type="disulfide bond" evidence="1">
    <location>
        <begin position="289"/>
        <end position="476"/>
    </location>
</feature>
<feature type="sequence variant" id="VAR_020949" description="In dbSNP:rs17435959." evidence="6">
    <original>L</original>
    <variation>V</variation>
    <location>
        <position position="4"/>
    </location>
</feature>
<feature type="sequence variant" id="VAR_020950" description="In dbSNP:rs486055." evidence="5 6">
    <original>R</original>
    <variation>K</variation>
    <location>
        <position position="53"/>
    </location>
</feature>
<feature type="sequence variant" id="VAR_020951" description="In dbSNP:rs17293607." evidence="6">
    <original>G</original>
    <variation>R</variation>
    <location>
        <position position="65"/>
    </location>
</feature>
<feature type="sequence variant" id="VAR_036139" description="In a breast cancer sample; somatic mutation." evidence="4">
    <original>E</original>
    <variation>Q</variation>
    <location>
        <position position="142"/>
    </location>
</feature>
<feature type="sequence variant" id="VAR_020952" description="In dbSNP:rs17860971." evidence="6">
    <original>F</original>
    <variation>L</variation>
    <location>
        <position position="226"/>
    </location>
</feature>
<feature type="sequence variant" id="VAR_020953" description="In dbSNP:rs17860973." evidence="6">
    <original>G</original>
    <variation>E</variation>
    <location>
        <position position="282"/>
    </location>
</feature>
<feature type="sequence variant" id="VAR_020954" description="In dbSNP:rs17860996." evidence="6">
    <original>L</original>
    <variation>F</variation>
    <location>
        <position position="440"/>
    </location>
</feature>
<feature type="sequence variant" id="VAR_020955" description="In dbSNP:rs17861009." evidence="6">
    <original>H</original>
    <variation>L</variation>
    <location>
        <position position="475"/>
    </location>
</feature>
<feature type="strand" evidence="9">
    <location>
        <begin position="111"/>
        <end position="117"/>
    </location>
</feature>
<feature type="helix" evidence="9">
    <location>
        <begin position="126"/>
        <end position="141"/>
    </location>
</feature>
<feature type="strand" evidence="9">
    <location>
        <begin position="147"/>
        <end position="150"/>
    </location>
</feature>
<feature type="strand" evidence="9">
    <location>
        <begin position="152"/>
        <end position="154"/>
    </location>
</feature>
<feature type="strand" evidence="9">
    <location>
        <begin position="157"/>
        <end position="163"/>
    </location>
</feature>
<feature type="strand" evidence="9">
    <location>
        <begin position="168"/>
        <end position="171"/>
    </location>
</feature>
<feature type="strand" evidence="9">
    <location>
        <begin position="175"/>
        <end position="183"/>
    </location>
</feature>
<feature type="strand" evidence="9">
    <location>
        <begin position="186"/>
        <end position="188"/>
    </location>
</feature>
<feature type="turn" evidence="9">
    <location>
        <begin position="189"/>
        <end position="192"/>
    </location>
</feature>
<feature type="strand" evidence="9">
    <location>
        <begin position="194"/>
        <end position="197"/>
    </location>
</feature>
<feature type="strand" evidence="9">
    <location>
        <begin position="202"/>
        <end position="210"/>
    </location>
</feature>
<feature type="helix" evidence="9">
    <location>
        <begin position="211"/>
        <end position="223"/>
    </location>
</feature>
<feature type="strand" evidence="8">
    <location>
        <begin position="231"/>
        <end position="233"/>
    </location>
</feature>
<feature type="strand" evidence="9">
    <location>
        <begin position="237"/>
        <end position="239"/>
    </location>
</feature>
<feature type="helix" evidence="9">
    <location>
        <begin position="242"/>
        <end position="247"/>
    </location>
</feature>
<feature type="helix" evidence="9">
    <location>
        <begin position="252"/>
        <end position="262"/>
    </location>
</feature>
<keyword id="KW-0002">3D-structure</keyword>
<keyword id="KW-0106">Calcium</keyword>
<keyword id="KW-0177">Collagen degradation</keyword>
<keyword id="KW-1015">Disulfide bond</keyword>
<keyword id="KW-0272">Extracellular matrix</keyword>
<keyword id="KW-0378">Hydrolase</keyword>
<keyword id="KW-0479">Metal-binding</keyword>
<keyword id="KW-0482">Metalloprotease</keyword>
<keyword id="KW-0645">Protease</keyword>
<keyword id="KW-1267">Proteomics identification</keyword>
<keyword id="KW-1185">Reference proteome</keyword>
<keyword id="KW-0677">Repeat</keyword>
<keyword id="KW-0964">Secreted</keyword>
<keyword id="KW-0732">Signal</keyword>
<keyword id="KW-0862">Zinc</keyword>
<keyword id="KW-0865">Zymogen</keyword>
<accession>P09238</accession>
<accession>B2R9X9</accession>
<accession>Q53HH9</accession>
<evidence type="ECO:0000250" key="1"/>
<evidence type="ECO:0000255" key="2">
    <source>
        <dbReference type="PROSITE-ProRule" id="PRU10095"/>
    </source>
</evidence>
<evidence type="ECO:0000269" key="3">
    <source>
    </source>
</evidence>
<evidence type="ECO:0000269" key="4">
    <source>
    </source>
</evidence>
<evidence type="ECO:0000269" key="5">
    <source ref="4"/>
</evidence>
<evidence type="ECO:0000269" key="6">
    <source ref="5"/>
</evidence>
<evidence type="ECO:0000305" key="7"/>
<evidence type="ECO:0007829" key="8">
    <source>
        <dbReference type="PDB" id="1Q3A"/>
    </source>
</evidence>
<evidence type="ECO:0007829" key="9">
    <source>
        <dbReference type="PDB" id="3V96"/>
    </source>
</evidence>
<gene>
    <name type="primary">MMP10</name>
    <name type="synonym">STMY2</name>
</gene>
<reference key="1">
    <citation type="journal article" date="1988" name="Biochem. J.">
        <title>The collagenase gene family in humans consists of at least four members.</title>
        <authorList>
            <person name="Muller D."/>
            <person name="Quantin B."/>
            <person name="Gesnel M.-C."/>
            <person name="Millon-Collard R."/>
            <person name="Abecassis J."/>
            <person name="Breathnach R."/>
        </authorList>
    </citation>
    <scope>NUCLEOTIDE SEQUENCE [MRNA]</scope>
</reference>
<reference key="2">
    <citation type="submission" date="2004-10" db="EMBL/GenBank/DDBJ databases">
        <title>Cloning of human full-length CDSs in BD Creator(TM) system donor vector.</title>
        <authorList>
            <person name="Kalnine N."/>
            <person name="Chen X."/>
            <person name="Rolfs A."/>
            <person name="Halleck A."/>
            <person name="Hines L."/>
            <person name="Eisenstein S."/>
            <person name="Koundinya M."/>
            <person name="Raphael J."/>
            <person name="Moreira D."/>
            <person name="Kelley T."/>
            <person name="LaBaer J."/>
            <person name="Lin Y."/>
            <person name="Phelan M."/>
            <person name="Farmer A."/>
        </authorList>
    </citation>
    <scope>NUCLEOTIDE SEQUENCE [LARGE SCALE MRNA]</scope>
</reference>
<reference key="3">
    <citation type="journal article" date="2004" name="Nat. Genet.">
        <title>Complete sequencing and characterization of 21,243 full-length human cDNAs.</title>
        <authorList>
            <person name="Ota T."/>
            <person name="Suzuki Y."/>
            <person name="Nishikawa T."/>
            <person name="Otsuki T."/>
            <person name="Sugiyama T."/>
            <person name="Irie R."/>
            <person name="Wakamatsu A."/>
            <person name="Hayashi K."/>
            <person name="Sato H."/>
            <person name="Nagai K."/>
            <person name="Kimura K."/>
            <person name="Makita H."/>
            <person name="Sekine M."/>
            <person name="Obayashi M."/>
            <person name="Nishi T."/>
            <person name="Shibahara T."/>
            <person name="Tanaka T."/>
            <person name="Ishii S."/>
            <person name="Yamamoto J."/>
            <person name="Saito K."/>
            <person name="Kawai Y."/>
            <person name="Isono Y."/>
            <person name="Nakamura Y."/>
            <person name="Nagahari K."/>
            <person name="Murakami K."/>
            <person name="Yasuda T."/>
            <person name="Iwayanagi T."/>
            <person name="Wagatsuma M."/>
            <person name="Shiratori A."/>
            <person name="Sudo H."/>
            <person name="Hosoiri T."/>
            <person name="Kaku Y."/>
            <person name="Kodaira H."/>
            <person name="Kondo H."/>
            <person name="Sugawara M."/>
            <person name="Takahashi M."/>
            <person name="Kanda K."/>
            <person name="Yokoi T."/>
            <person name="Furuya T."/>
            <person name="Kikkawa E."/>
            <person name="Omura Y."/>
            <person name="Abe K."/>
            <person name="Kamihara K."/>
            <person name="Katsuta N."/>
            <person name="Sato K."/>
            <person name="Tanikawa M."/>
            <person name="Yamazaki M."/>
            <person name="Ninomiya K."/>
            <person name="Ishibashi T."/>
            <person name="Yamashita H."/>
            <person name="Murakawa K."/>
            <person name="Fujimori K."/>
            <person name="Tanai H."/>
            <person name="Kimata M."/>
            <person name="Watanabe M."/>
            <person name="Hiraoka S."/>
            <person name="Chiba Y."/>
            <person name="Ishida S."/>
            <person name="Ono Y."/>
            <person name="Takiguchi S."/>
            <person name="Watanabe S."/>
            <person name="Yosida M."/>
            <person name="Hotuta T."/>
            <person name="Kusano J."/>
            <person name="Kanehori K."/>
            <person name="Takahashi-Fujii A."/>
            <person name="Hara H."/>
            <person name="Tanase T.-O."/>
            <person name="Nomura Y."/>
            <person name="Togiya S."/>
            <person name="Komai F."/>
            <person name="Hara R."/>
            <person name="Takeuchi K."/>
            <person name="Arita M."/>
            <person name="Imose N."/>
            <person name="Musashino K."/>
            <person name="Yuuki H."/>
            <person name="Oshima A."/>
            <person name="Sasaki N."/>
            <person name="Aotsuka S."/>
            <person name="Yoshikawa Y."/>
            <person name="Matsunawa H."/>
            <person name="Ichihara T."/>
            <person name="Shiohata N."/>
            <person name="Sano S."/>
            <person name="Moriya S."/>
            <person name="Momiyama H."/>
            <person name="Satoh N."/>
            <person name="Takami S."/>
            <person name="Terashima Y."/>
            <person name="Suzuki O."/>
            <person name="Nakagawa S."/>
            <person name="Senoh A."/>
            <person name="Mizoguchi H."/>
            <person name="Goto Y."/>
            <person name="Shimizu F."/>
            <person name="Wakebe H."/>
            <person name="Hishigaki H."/>
            <person name="Watanabe T."/>
            <person name="Sugiyama A."/>
            <person name="Takemoto M."/>
            <person name="Kawakami B."/>
            <person name="Yamazaki M."/>
            <person name="Watanabe K."/>
            <person name="Kumagai A."/>
            <person name="Itakura S."/>
            <person name="Fukuzumi Y."/>
            <person name="Fujimori Y."/>
            <person name="Komiyama M."/>
            <person name="Tashiro H."/>
            <person name="Tanigami A."/>
            <person name="Fujiwara T."/>
            <person name="Ono T."/>
            <person name="Yamada K."/>
            <person name="Fujii Y."/>
            <person name="Ozaki K."/>
            <person name="Hirao M."/>
            <person name="Ohmori Y."/>
            <person name="Kawabata A."/>
            <person name="Hikiji T."/>
            <person name="Kobatake N."/>
            <person name="Inagaki H."/>
            <person name="Ikema Y."/>
            <person name="Okamoto S."/>
            <person name="Okitani R."/>
            <person name="Kawakami T."/>
            <person name="Noguchi S."/>
            <person name="Itoh T."/>
            <person name="Shigeta K."/>
            <person name="Senba T."/>
            <person name="Matsumura K."/>
            <person name="Nakajima Y."/>
            <person name="Mizuno T."/>
            <person name="Morinaga M."/>
            <person name="Sasaki M."/>
            <person name="Togashi T."/>
            <person name="Oyama M."/>
            <person name="Hata H."/>
            <person name="Watanabe M."/>
            <person name="Komatsu T."/>
            <person name="Mizushima-Sugano J."/>
            <person name="Satoh T."/>
            <person name="Shirai Y."/>
            <person name="Takahashi Y."/>
            <person name="Nakagawa K."/>
            <person name="Okumura K."/>
            <person name="Nagase T."/>
            <person name="Nomura N."/>
            <person name="Kikuchi H."/>
            <person name="Masuho Y."/>
            <person name="Yamashita R."/>
            <person name="Nakai K."/>
            <person name="Yada T."/>
            <person name="Nakamura Y."/>
            <person name="Ohara O."/>
            <person name="Isogai T."/>
            <person name="Sugano S."/>
        </authorList>
    </citation>
    <scope>NUCLEOTIDE SEQUENCE [LARGE SCALE MRNA]</scope>
    <source>
        <tissue>Esophagus</tissue>
    </source>
</reference>
<reference key="4">
    <citation type="submission" date="2005-04" db="EMBL/GenBank/DDBJ databases">
        <authorList>
            <person name="Suzuki Y."/>
            <person name="Sugano S."/>
            <person name="Totoki Y."/>
            <person name="Toyoda A."/>
            <person name="Takeda T."/>
            <person name="Sakaki Y."/>
            <person name="Tanaka A."/>
            <person name="Yokoyama S."/>
        </authorList>
    </citation>
    <scope>NUCLEOTIDE SEQUENCE [LARGE SCALE MRNA]</scope>
    <scope>VARIANT LYS-53</scope>
    <source>
        <tissue>Coronary artery</tissue>
    </source>
</reference>
<reference key="5">
    <citation type="submission" date="2004-09" db="EMBL/GenBank/DDBJ databases">
        <authorList>
            <consortium name="NIEHS SNPs program"/>
        </authorList>
    </citation>
    <scope>NUCLEOTIDE SEQUENCE [GENOMIC DNA]</scope>
    <scope>VARIANTS VAL-4; LYS-53; ARG-65; LEU-226; GLU-282; PHE-440 AND LEU-475</scope>
</reference>
<reference key="6">
    <citation type="submission" date="2005-07" db="EMBL/GenBank/DDBJ databases">
        <authorList>
            <person name="Mural R.J."/>
            <person name="Istrail S."/>
            <person name="Sutton G.G."/>
            <person name="Florea L."/>
            <person name="Halpern A.L."/>
            <person name="Mobarry C.M."/>
            <person name="Lippert R."/>
            <person name="Walenz B."/>
            <person name="Shatkay H."/>
            <person name="Dew I."/>
            <person name="Miller J.R."/>
            <person name="Flanigan M.J."/>
            <person name="Edwards N.J."/>
            <person name="Bolanos R."/>
            <person name="Fasulo D."/>
            <person name="Halldorsson B.V."/>
            <person name="Hannenhalli S."/>
            <person name="Turner R."/>
            <person name="Yooseph S."/>
            <person name="Lu F."/>
            <person name="Nusskern D.R."/>
            <person name="Shue B.C."/>
            <person name="Zheng X.H."/>
            <person name="Zhong F."/>
            <person name="Delcher A.L."/>
            <person name="Huson D.H."/>
            <person name="Kravitz S.A."/>
            <person name="Mouchard L."/>
            <person name="Reinert K."/>
            <person name="Remington K.A."/>
            <person name="Clark A.G."/>
            <person name="Waterman M.S."/>
            <person name="Eichler E.E."/>
            <person name="Adams M.D."/>
            <person name="Hunkapiller M.W."/>
            <person name="Myers E.W."/>
            <person name="Venter J.C."/>
        </authorList>
    </citation>
    <scope>NUCLEOTIDE SEQUENCE [LARGE SCALE GENOMIC DNA]</scope>
</reference>
<reference key="7">
    <citation type="journal article" date="2004" name="Genome Res.">
        <title>The status, quality, and expansion of the NIH full-length cDNA project: the Mammalian Gene Collection (MGC).</title>
        <authorList>
            <consortium name="The MGC Project Team"/>
        </authorList>
    </citation>
    <scope>NUCLEOTIDE SEQUENCE [LARGE SCALE MRNA]</scope>
    <source>
        <tissue>Ovary</tissue>
    </source>
</reference>
<reference key="8">
    <citation type="journal article" date="2004" name="J. Mol. Biol.">
        <title>Crystal structure of the catalytic domain of human matrix metalloproteinase 10.</title>
        <authorList>
            <person name="Bertini I."/>
            <person name="Calderone V."/>
            <person name="Fragai M."/>
            <person name="Luchinat C."/>
            <person name="Mangani S."/>
            <person name="Terni B."/>
        </authorList>
    </citation>
    <scope>X-RAY CRYSTALLOGRAPHY (2.1 ANGSTROMS) OF 99-263</scope>
    <scope>CATALYTIC ACTIVITY</scope>
    <scope>ACTIVE SITE</scope>
    <scope>COFACTOR</scope>
    <scope>CALCIUM-BINDING</scope>
    <scope>ZINC-BINDING SITES</scope>
</reference>
<reference key="9">
    <citation type="journal article" date="2006" name="Science">
        <title>The consensus coding sequences of human breast and colorectal cancers.</title>
        <authorList>
            <person name="Sjoeblom T."/>
            <person name="Jones S."/>
            <person name="Wood L.D."/>
            <person name="Parsons D.W."/>
            <person name="Lin J."/>
            <person name="Barber T.D."/>
            <person name="Mandelker D."/>
            <person name="Leary R.J."/>
            <person name="Ptak J."/>
            <person name="Silliman N."/>
            <person name="Szabo S."/>
            <person name="Buckhaults P."/>
            <person name="Farrell C."/>
            <person name="Meeh P."/>
            <person name="Markowitz S.D."/>
            <person name="Willis J."/>
            <person name="Dawson D."/>
            <person name="Willson J.K.V."/>
            <person name="Gazdar A.F."/>
            <person name="Hartigan J."/>
            <person name="Wu L."/>
            <person name="Liu C."/>
            <person name="Parmigiani G."/>
            <person name="Park B.H."/>
            <person name="Bachman K.E."/>
            <person name="Papadopoulos N."/>
            <person name="Vogelstein B."/>
            <person name="Kinzler K.W."/>
            <person name="Velculescu V.E."/>
        </authorList>
    </citation>
    <scope>VARIANT [LARGE SCALE ANALYSIS] GLN-142</scope>
</reference>
<sequence>MMHLAFLVLLCLPVCSAYPLSGAAKEEDSNKDLAQQYLEKYYNLEKDVKQFRRKDSNLIVKKIQGMQKFLGLEVTGKLDTDTLEVMRKPRCGVPDVGHFSSFPGMPKWRKTHLTYRIVNYTPDLPRDAVDSAIEKALKVWEEVTPLTFSRLYEGEADIMISFAVKEHGDFYSFDGPGHSLAHAYPPGPGLYGDIHFDDDEKWTEDASGTNLFLVAAHELGHSLGLFHSANTEALMYPLYNSFTELAQFRLSQDDVNGIQSLYGPPPASTEEPLVPTKSVPSGSEMPAKCDPALSFDAISTLRGEYLFFKDRYFWRRSHWNPEPEFHLISAFWPSLPSYLDAAYEVNSRDTVFIFKGNEFWAIRGNEVQAGYPRGIHTLGFPPTIRKIDAAVSDKEKKKTYFFAADKYWRFDENSQSMEQGFPRLIADDFPGVEPKVDAVLQAFGFFYFFSGSSQFEFDPNARMVTHILKSNSWLHC</sequence>
<dbReference type="EC" id="3.4.24.22"/>
<dbReference type="EMBL" id="X07820">
    <property type="protein sequence ID" value="CAA30679.1"/>
    <property type="molecule type" value="mRNA"/>
</dbReference>
<dbReference type="EMBL" id="BT007442">
    <property type="protein sequence ID" value="AAP36110.1"/>
    <property type="molecule type" value="mRNA"/>
</dbReference>
<dbReference type="EMBL" id="AK222601">
    <property type="protein sequence ID" value="BAD96321.1"/>
    <property type="molecule type" value="mRNA"/>
</dbReference>
<dbReference type="EMBL" id="AK313960">
    <property type="protein sequence ID" value="BAG36676.1"/>
    <property type="molecule type" value="mRNA"/>
</dbReference>
<dbReference type="EMBL" id="AY744675">
    <property type="protein sequence ID" value="AAU21039.1"/>
    <property type="molecule type" value="Genomic_DNA"/>
</dbReference>
<dbReference type="EMBL" id="CH471065">
    <property type="protein sequence ID" value="EAW67029.1"/>
    <property type="molecule type" value="Genomic_DNA"/>
</dbReference>
<dbReference type="EMBL" id="BC002591">
    <property type="protein sequence ID" value="AAH02591.1"/>
    <property type="molecule type" value="mRNA"/>
</dbReference>
<dbReference type="CCDS" id="CCDS8321.1"/>
<dbReference type="PIR" id="A28816">
    <property type="entry name" value="KCHUS2"/>
</dbReference>
<dbReference type="RefSeq" id="NP_002416.1">
    <property type="nucleotide sequence ID" value="NM_002425.3"/>
</dbReference>
<dbReference type="PDB" id="1Q3A">
    <property type="method" value="X-ray"/>
    <property type="resolution" value="2.10 A"/>
    <property type="chains" value="A/B/C=99-263"/>
</dbReference>
<dbReference type="PDB" id="3V96">
    <property type="method" value="X-ray"/>
    <property type="resolution" value="1.90 A"/>
    <property type="chains" value="B=99-263"/>
</dbReference>
<dbReference type="PDB" id="4ILW">
    <property type="method" value="X-ray"/>
    <property type="resolution" value="2.10 A"/>
    <property type="chains" value="D/F=99-263"/>
</dbReference>
<dbReference type="PDBsum" id="1Q3A"/>
<dbReference type="PDBsum" id="3V96"/>
<dbReference type="PDBsum" id="4ILW"/>
<dbReference type="SMR" id="P09238"/>
<dbReference type="BioGRID" id="110462">
    <property type="interactions" value="29"/>
</dbReference>
<dbReference type="FunCoup" id="P09238">
    <property type="interactions" value="103"/>
</dbReference>
<dbReference type="IntAct" id="P09238">
    <property type="interactions" value="19"/>
</dbReference>
<dbReference type="STRING" id="9606.ENSP00000279441"/>
<dbReference type="BindingDB" id="P09238"/>
<dbReference type="ChEMBL" id="CHEMBL4270"/>
<dbReference type="DrugBank" id="DB00786">
    <property type="generic name" value="Marimastat"/>
</dbReference>
<dbReference type="DrugBank" id="DB08271">
    <property type="generic name" value="N-ISOBUTYL-N-[4-METHOXYPHENYLSULFONYL]GLYCYL HYDROXAMIC ACID"/>
</dbReference>
<dbReference type="GuidetoPHARMACOLOGY" id="1634"/>
<dbReference type="MEROPS" id="M10.006"/>
<dbReference type="iPTMnet" id="P09238"/>
<dbReference type="PhosphoSitePlus" id="P09238"/>
<dbReference type="BioMuta" id="MMP10"/>
<dbReference type="DMDM" id="116869"/>
<dbReference type="MassIVE" id="P09238"/>
<dbReference type="PaxDb" id="9606-ENSP00000279441"/>
<dbReference type="PeptideAtlas" id="P09238"/>
<dbReference type="ProteomicsDB" id="52211"/>
<dbReference type="TopDownProteomics" id="P09238"/>
<dbReference type="Antibodypedia" id="3688">
    <property type="antibodies" value="594 antibodies from 36 providers"/>
</dbReference>
<dbReference type="DNASU" id="4319"/>
<dbReference type="Ensembl" id="ENST00000279441.9">
    <property type="protein sequence ID" value="ENSP00000279441.4"/>
    <property type="gene ID" value="ENSG00000166670.10"/>
</dbReference>
<dbReference type="GeneID" id="4319"/>
<dbReference type="KEGG" id="hsa:4319"/>
<dbReference type="MANE-Select" id="ENST00000279441.9">
    <property type="protein sequence ID" value="ENSP00000279441.4"/>
    <property type="RefSeq nucleotide sequence ID" value="NM_002425.3"/>
    <property type="RefSeq protein sequence ID" value="NP_002416.1"/>
</dbReference>
<dbReference type="UCSC" id="uc001phg.3">
    <property type="organism name" value="human"/>
</dbReference>
<dbReference type="AGR" id="HGNC:7156"/>
<dbReference type="CTD" id="4319"/>
<dbReference type="DisGeNET" id="4319"/>
<dbReference type="GeneCards" id="MMP10"/>
<dbReference type="HGNC" id="HGNC:7156">
    <property type="gene designation" value="MMP10"/>
</dbReference>
<dbReference type="HPA" id="ENSG00000166670">
    <property type="expression patterns" value="Tissue enriched (endometrium)"/>
</dbReference>
<dbReference type="MIM" id="185260">
    <property type="type" value="gene"/>
</dbReference>
<dbReference type="neXtProt" id="NX_P09238"/>
<dbReference type="OpenTargets" id="ENSG00000166670"/>
<dbReference type="PharmGKB" id="PA30868"/>
<dbReference type="VEuPathDB" id="HostDB:ENSG00000166670"/>
<dbReference type="eggNOG" id="KOG1565">
    <property type="taxonomic scope" value="Eukaryota"/>
</dbReference>
<dbReference type="GeneTree" id="ENSGT00940000163375"/>
<dbReference type="HOGENOM" id="CLU_015489_6_0_1"/>
<dbReference type="InParanoid" id="P09238"/>
<dbReference type="OMA" id="NLEPEFH"/>
<dbReference type="OrthoDB" id="406838at2759"/>
<dbReference type="PAN-GO" id="P09238">
    <property type="GO annotations" value="3 GO annotations based on evolutionary models"/>
</dbReference>
<dbReference type="PhylomeDB" id="P09238"/>
<dbReference type="TreeFam" id="TF315428"/>
<dbReference type="BRENDA" id="3.4.24.22">
    <property type="organism ID" value="2681"/>
</dbReference>
<dbReference type="PathwayCommons" id="P09238"/>
<dbReference type="Reactome" id="R-HSA-1442490">
    <property type="pathway name" value="Collagen degradation"/>
</dbReference>
<dbReference type="Reactome" id="R-HSA-1474228">
    <property type="pathway name" value="Degradation of the extracellular matrix"/>
</dbReference>
<dbReference type="Reactome" id="R-HSA-1592389">
    <property type="pathway name" value="Activation of Matrix Metalloproteinases"/>
</dbReference>
<dbReference type="SignaLink" id="P09238"/>
<dbReference type="SIGNOR" id="P09238"/>
<dbReference type="BioGRID-ORCS" id="4319">
    <property type="hits" value="13 hits in 1162 CRISPR screens"/>
</dbReference>
<dbReference type="ChiTaRS" id="MMP10">
    <property type="organism name" value="human"/>
</dbReference>
<dbReference type="EvolutionaryTrace" id="P09238"/>
<dbReference type="GeneWiki" id="MMP10"/>
<dbReference type="GenomeRNAi" id="4319"/>
<dbReference type="Pharos" id="P09238">
    <property type="development level" value="Tchem"/>
</dbReference>
<dbReference type="PRO" id="PR:P09238"/>
<dbReference type="Proteomes" id="UP000005640">
    <property type="component" value="Chromosome 11"/>
</dbReference>
<dbReference type="RNAct" id="P09238">
    <property type="molecule type" value="protein"/>
</dbReference>
<dbReference type="Bgee" id="ENSG00000166670">
    <property type="expression patterns" value="Expressed in mucosa of paranasal sinus and 87 other cell types or tissues"/>
</dbReference>
<dbReference type="ExpressionAtlas" id="P09238">
    <property type="expression patterns" value="baseline and differential"/>
</dbReference>
<dbReference type="GO" id="GO:0031012">
    <property type="term" value="C:extracellular matrix"/>
    <property type="evidence" value="ECO:0000304"/>
    <property type="project" value="ProtInc"/>
</dbReference>
<dbReference type="GO" id="GO:0005576">
    <property type="term" value="C:extracellular region"/>
    <property type="evidence" value="ECO:0000304"/>
    <property type="project" value="Reactome"/>
</dbReference>
<dbReference type="GO" id="GO:0005615">
    <property type="term" value="C:extracellular space"/>
    <property type="evidence" value="ECO:0000304"/>
    <property type="project" value="ProtInc"/>
</dbReference>
<dbReference type="GO" id="GO:0004222">
    <property type="term" value="F:metalloendopeptidase activity"/>
    <property type="evidence" value="ECO:0000318"/>
    <property type="project" value="GO_Central"/>
</dbReference>
<dbReference type="GO" id="GO:0004252">
    <property type="term" value="F:serine-type endopeptidase activity"/>
    <property type="evidence" value="ECO:0000304"/>
    <property type="project" value="Reactome"/>
</dbReference>
<dbReference type="GO" id="GO:0008270">
    <property type="term" value="F:zinc ion binding"/>
    <property type="evidence" value="ECO:0000304"/>
    <property type="project" value="ProtInc"/>
</dbReference>
<dbReference type="GO" id="GO:0030574">
    <property type="term" value="P:collagen catabolic process"/>
    <property type="evidence" value="ECO:0000318"/>
    <property type="project" value="GO_Central"/>
</dbReference>
<dbReference type="GO" id="GO:0022617">
    <property type="term" value="P:extracellular matrix disassembly"/>
    <property type="evidence" value="ECO:0000304"/>
    <property type="project" value="Reactome"/>
</dbReference>
<dbReference type="GO" id="GO:0030198">
    <property type="term" value="P:extracellular matrix organization"/>
    <property type="evidence" value="ECO:0000318"/>
    <property type="project" value="GO_Central"/>
</dbReference>
<dbReference type="GO" id="GO:0006508">
    <property type="term" value="P:proteolysis"/>
    <property type="evidence" value="ECO:0000304"/>
    <property type="project" value="ProtInc"/>
</dbReference>
<dbReference type="CDD" id="cd00094">
    <property type="entry name" value="HX"/>
    <property type="match status" value="1"/>
</dbReference>
<dbReference type="CDD" id="cd04278">
    <property type="entry name" value="ZnMc_MMP"/>
    <property type="match status" value="1"/>
</dbReference>
<dbReference type="FunFam" id="3.40.390.10:FF:000007">
    <property type="entry name" value="Collagenase 3"/>
    <property type="match status" value="1"/>
</dbReference>
<dbReference type="FunFam" id="2.110.10.10:FF:000002">
    <property type="entry name" value="Matrix metallopeptidase 3"/>
    <property type="match status" value="1"/>
</dbReference>
<dbReference type="Gene3D" id="3.40.390.10">
    <property type="entry name" value="Collagenase (Catalytic Domain)"/>
    <property type="match status" value="1"/>
</dbReference>
<dbReference type="Gene3D" id="2.110.10.10">
    <property type="entry name" value="Hemopexin-like domain"/>
    <property type="match status" value="1"/>
</dbReference>
<dbReference type="InterPro" id="IPR000585">
    <property type="entry name" value="Hemopexin-like_dom"/>
</dbReference>
<dbReference type="InterPro" id="IPR036375">
    <property type="entry name" value="Hemopexin-like_dom_sf"/>
</dbReference>
<dbReference type="InterPro" id="IPR018487">
    <property type="entry name" value="Hemopexin-like_repeat"/>
</dbReference>
<dbReference type="InterPro" id="IPR018486">
    <property type="entry name" value="Hemopexin_CS"/>
</dbReference>
<dbReference type="InterPro" id="IPR033739">
    <property type="entry name" value="M10A_MMP"/>
</dbReference>
<dbReference type="InterPro" id="IPR024079">
    <property type="entry name" value="MetalloPept_cat_dom_sf"/>
</dbReference>
<dbReference type="InterPro" id="IPR001818">
    <property type="entry name" value="Pept_M10_metallopeptidase"/>
</dbReference>
<dbReference type="InterPro" id="IPR021190">
    <property type="entry name" value="Pept_M10A"/>
</dbReference>
<dbReference type="InterPro" id="IPR021158">
    <property type="entry name" value="Pept_M10A_Zn_BS"/>
</dbReference>
<dbReference type="InterPro" id="IPR006026">
    <property type="entry name" value="Peptidase_Metallo"/>
</dbReference>
<dbReference type="InterPro" id="IPR002477">
    <property type="entry name" value="Peptidoglycan-bd-like"/>
</dbReference>
<dbReference type="InterPro" id="IPR036365">
    <property type="entry name" value="PGBD-like_sf"/>
</dbReference>
<dbReference type="PANTHER" id="PTHR10201">
    <property type="entry name" value="MATRIX METALLOPROTEINASE"/>
    <property type="match status" value="1"/>
</dbReference>
<dbReference type="PANTHER" id="PTHR10201:SF270">
    <property type="entry name" value="STROMELYSIN-2"/>
    <property type="match status" value="1"/>
</dbReference>
<dbReference type="Pfam" id="PF00045">
    <property type="entry name" value="Hemopexin"/>
    <property type="match status" value="4"/>
</dbReference>
<dbReference type="Pfam" id="PF00413">
    <property type="entry name" value="Peptidase_M10"/>
    <property type="match status" value="1"/>
</dbReference>
<dbReference type="Pfam" id="PF01471">
    <property type="entry name" value="PG_binding_1"/>
    <property type="match status" value="1"/>
</dbReference>
<dbReference type="PIRSF" id="PIRSF001191">
    <property type="entry name" value="Peptidase_M10A_matrix"/>
    <property type="match status" value="1"/>
</dbReference>
<dbReference type="PRINTS" id="PR00138">
    <property type="entry name" value="MATRIXIN"/>
</dbReference>
<dbReference type="SMART" id="SM00120">
    <property type="entry name" value="HX"/>
    <property type="match status" value="4"/>
</dbReference>
<dbReference type="SMART" id="SM00235">
    <property type="entry name" value="ZnMc"/>
    <property type="match status" value="1"/>
</dbReference>
<dbReference type="SUPFAM" id="SSF50923">
    <property type="entry name" value="Hemopexin-like domain"/>
    <property type="match status" value="1"/>
</dbReference>
<dbReference type="SUPFAM" id="SSF55486">
    <property type="entry name" value="Metalloproteases ('zincins'), catalytic domain"/>
    <property type="match status" value="1"/>
</dbReference>
<dbReference type="SUPFAM" id="SSF47090">
    <property type="entry name" value="PGBD-like"/>
    <property type="match status" value="1"/>
</dbReference>
<dbReference type="PROSITE" id="PS00546">
    <property type="entry name" value="CYSTEINE_SWITCH"/>
    <property type="match status" value="1"/>
</dbReference>
<dbReference type="PROSITE" id="PS00024">
    <property type="entry name" value="HEMOPEXIN"/>
    <property type="match status" value="1"/>
</dbReference>
<dbReference type="PROSITE" id="PS51642">
    <property type="entry name" value="HEMOPEXIN_2"/>
    <property type="match status" value="4"/>
</dbReference>
<dbReference type="PROSITE" id="PS00142">
    <property type="entry name" value="ZINC_PROTEASE"/>
    <property type="match status" value="1"/>
</dbReference>
<comment type="function">
    <text>Can degrade fibronectin, gelatins of type I, III, IV, and V; weakly collagens III, IV, and V. Activates procollagenase.</text>
</comment>
<comment type="catalytic activity">
    <reaction evidence="3">
        <text>Similar to stromelysin 1, but action on collagen types III, IV and V is weak.</text>
        <dbReference type="EC" id="3.4.24.22"/>
    </reaction>
</comment>
<comment type="cofactor">
    <cofactor evidence="3">
        <name>Zn(2+)</name>
        <dbReference type="ChEBI" id="CHEBI:29105"/>
    </cofactor>
    <text evidence="3">Binds 2 Zn(2+) ions per subunit.</text>
</comment>
<comment type="cofactor">
    <cofactor evidence="3">
        <name>Ca(2+)</name>
        <dbReference type="ChEBI" id="CHEBI:29108"/>
    </cofactor>
</comment>
<comment type="subcellular location">
    <subcellularLocation>
        <location evidence="7">Secreted</location>
        <location evidence="7">Extracellular space</location>
        <location evidence="7">Extracellular matrix</location>
    </subcellularLocation>
</comment>
<comment type="domain">
    <text>The conserved cysteine present in the cysteine-switch motif binds the catalytic zinc ion, thus inhibiting the enzyme. The dissociation of the cysteine from the zinc ion upon the activation-peptide release activates the enzyme.</text>
</comment>
<comment type="similarity">
    <text evidence="7">Belongs to the peptidase M10A family.</text>
</comment>
<name>MMP10_HUMAN</name>